<reference key="1">
    <citation type="journal article" date="2010" name="J. Bacteriol.">
        <title>Genome sequence of the Fleming strain of Micrococcus luteus, a simple free-living actinobacterium.</title>
        <authorList>
            <person name="Young M."/>
            <person name="Artsatbanov V."/>
            <person name="Beller H.R."/>
            <person name="Chandra G."/>
            <person name="Chater K.F."/>
            <person name="Dover L.G."/>
            <person name="Goh E.B."/>
            <person name="Kahan T."/>
            <person name="Kaprelyants A.S."/>
            <person name="Kyrpides N."/>
            <person name="Lapidus A."/>
            <person name="Lowry S.R."/>
            <person name="Lykidis A."/>
            <person name="Mahillon J."/>
            <person name="Markowitz V."/>
            <person name="Mavromatis K."/>
            <person name="Mukamolova G.V."/>
            <person name="Oren A."/>
            <person name="Rokem J.S."/>
            <person name="Smith M.C."/>
            <person name="Young D.I."/>
            <person name="Greenblatt C.L."/>
        </authorList>
    </citation>
    <scope>NUCLEOTIDE SEQUENCE [LARGE SCALE GENOMIC DNA]</scope>
    <source>
        <strain>ATCC 4698 / DSM 20030 / JCM 1464 / CCM 169 / CCUG 5858 / IAM 1056 / NBRC 3333 / NCIMB 9278 / NCTC 2665 / VKM Ac-2230</strain>
    </source>
</reference>
<dbReference type="EMBL" id="CP001628">
    <property type="protein sequence ID" value="ACS30412.1"/>
    <property type="molecule type" value="Genomic_DNA"/>
</dbReference>
<dbReference type="RefSeq" id="WP_010078949.1">
    <property type="nucleotide sequence ID" value="NC_012803.1"/>
</dbReference>
<dbReference type="SMR" id="C5CAE3"/>
<dbReference type="STRING" id="465515.Mlut_08890"/>
<dbReference type="EnsemblBacteria" id="ACS30412">
    <property type="protein sequence ID" value="ACS30412"/>
    <property type="gene ID" value="Mlut_08890"/>
</dbReference>
<dbReference type="GeneID" id="93345050"/>
<dbReference type="KEGG" id="mlu:Mlut_08890"/>
<dbReference type="PATRIC" id="fig|465515.4.peg.849"/>
<dbReference type="eggNOG" id="COG0333">
    <property type="taxonomic scope" value="Bacteria"/>
</dbReference>
<dbReference type="HOGENOM" id="CLU_2805252_0_0_11"/>
<dbReference type="Proteomes" id="UP000000738">
    <property type="component" value="Chromosome"/>
</dbReference>
<dbReference type="GO" id="GO:0015934">
    <property type="term" value="C:large ribosomal subunit"/>
    <property type="evidence" value="ECO:0007669"/>
    <property type="project" value="InterPro"/>
</dbReference>
<dbReference type="GO" id="GO:0003735">
    <property type="term" value="F:structural constituent of ribosome"/>
    <property type="evidence" value="ECO:0007669"/>
    <property type="project" value="InterPro"/>
</dbReference>
<dbReference type="GO" id="GO:0006412">
    <property type="term" value="P:translation"/>
    <property type="evidence" value="ECO:0007669"/>
    <property type="project" value="UniProtKB-UniRule"/>
</dbReference>
<dbReference type="HAMAP" id="MF_00340">
    <property type="entry name" value="Ribosomal_bL32"/>
    <property type="match status" value="1"/>
</dbReference>
<dbReference type="InterPro" id="IPR002677">
    <property type="entry name" value="Ribosomal_bL32"/>
</dbReference>
<dbReference type="InterPro" id="IPR011332">
    <property type="entry name" value="Ribosomal_zn-bd"/>
</dbReference>
<dbReference type="NCBIfam" id="TIGR01031">
    <property type="entry name" value="rpmF_bact"/>
    <property type="match status" value="1"/>
</dbReference>
<dbReference type="Pfam" id="PF01783">
    <property type="entry name" value="Ribosomal_L32p"/>
    <property type="match status" value="1"/>
</dbReference>
<dbReference type="SUPFAM" id="SSF57829">
    <property type="entry name" value="Zn-binding ribosomal proteins"/>
    <property type="match status" value="1"/>
</dbReference>
<accession>C5CAE3</accession>
<organism>
    <name type="scientific">Micrococcus luteus (strain ATCC 4698 / DSM 20030 / JCM 1464 / CCM 169 / CCUG 5858 / IAM 1056 / NBRC 3333 / NCIMB 9278 / NCTC 2665 / VKM Ac-2230)</name>
    <name type="common">Micrococcus lysodeikticus</name>
    <dbReference type="NCBI Taxonomy" id="465515"/>
    <lineage>
        <taxon>Bacteria</taxon>
        <taxon>Bacillati</taxon>
        <taxon>Actinomycetota</taxon>
        <taxon>Actinomycetes</taxon>
        <taxon>Micrococcales</taxon>
        <taxon>Micrococcaceae</taxon>
        <taxon>Micrococcus</taxon>
    </lineage>
</organism>
<keyword id="KW-1185">Reference proteome</keyword>
<keyword id="KW-0687">Ribonucleoprotein</keyword>
<keyword id="KW-0689">Ribosomal protein</keyword>
<protein>
    <recommendedName>
        <fullName evidence="1">Large ribosomal subunit protein bL32</fullName>
    </recommendedName>
    <alternativeName>
        <fullName evidence="3">50S ribosomal protein L32</fullName>
    </alternativeName>
</protein>
<name>RL32_MICLC</name>
<sequence>MAVPKRKMSRANTRARRSQWKATAPTLVKSVENGRVSYRLPHQAELKTDAAGTPLFLEYKGRKVADA</sequence>
<gene>
    <name evidence="1" type="primary">rpmF</name>
    <name type="ordered locus">Mlut_08890</name>
</gene>
<evidence type="ECO:0000255" key="1">
    <source>
        <dbReference type="HAMAP-Rule" id="MF_00340"/>
    </source>
</evidence>
<evidence type="ECO:0000256" key="2">
    <source>
        <dbReference type="SAM" id="MobiDB-lite"/>
    </source>
</evidence>
<evidence type="ECO:0000305" key="3"/>
<proteinExistence type="inferred from homology"/>
<comment type="similarity">
    <text evidence="1">Belongs to the bacterial ribosomal protein bL32 family.</text>
</comment>
<feature type="chain" id="PRO_1000205267" description="Large ribosomal subunit protein bL32">
    <location>
        <begin position="1"/>
        <end position="67"/>
    </location>
</feature>
<feature type="region of interest" description="Disordered" evidence="2">
    <location>
        <begin position="1"/>
        <end position="21"/>
    </location>
</feature>
<feature type="compositionally biased region" description="Basic residues" evidence="2">
    <location>
        <begin position="1"/>
        <end position="19"/>
    </location>
</feature>